<gene>
    <name evidence="1" type="primary">lolB</name>
    <name type="ordered locus">SSPA1022</name>
</gene>
<feature type="signal peptide" evidence="1">
    <location>
        <begin position="1"/>
        <end position="21"/>
    </location>
</feature>
<feature type="chain" id="PRO_1000100508" description="Outer-membrane lipoprotein LolB">
    <location>
        <begin position="22"/>
        <end position="207"/>
    </location>
</feature>
<feature type="lipid moiety-binding region" description="N-palmitoyl cysteine" evidence="1">
    <location>
        <position position="22"/>
    </location>
</feature>
<feature type="lipid moiety-binding region" description="S-diacylglycerol cysteine" evidence="1">
    <location>
        <position position="22"/>
    </location>
</feature>
<dbReference type="EMBL" id="FM200053">
    <property type="protein sequence ID" value="CAR59175.1"/>
    <property type="molecule type" value="Genomic_DNA"/>
</dbReference>
<dbReference type="RefSeq" id="WP_000174484.1">
    <property type="nucleotide sequence ID" value="NC_011147.1"/>
</dbReference>
<dbReference type="SMR" id="B5BI73"/>
<dbReference type="KEGG" id="sek:SSPA1022"/>
<dbReference type="HOGENOM" id="CLU_092816_1_1_6"/>
<dbReference type="Proteomes" id="UP000001869">
    <property type="component" value="Chromosome"/>
</dbReference>
<dbReference type="GO" id="GO:0009279">
    <property type="term" value="C:cell outer membrane"/>
    <property type="evidence" value="ECO:0007669"/>
    <property type="project" value="UniProtKB-SubCell"/>
</dbReference>
<dbReference type="GO" id="GO:0044874">
    <property type="term" value="P:lipoprotein localization to outer membrane"/>
    <property type="evidence" value="ECO:0007669"/>
    <property type="project" value="UniProtKB-UniRule"/>
</dbReference>
<dbReference type="GO" id="GO:0015031">
    <property type="term" value="P:protein transport"/>
    <property type="evidence" value="ECO:0007669"/>
    <property type="project" value="UniProtKB-KW"/>
</dbReference>
<dbReference type="CDD" id="cd16326">
    <property type="entry name" value="LolB"/>
    <property type="match status" value="1"/>
</dbReference>
<dbReference type="FunFam" id="2.50.20.10:FF:000002">
    <property type="entry name" value="Outer-membrane lipoprotein LolB"/>
    <property type="match status" value="1"/>
</dbReference>
<dbReference type="Gene3D" id="2.50.20.10">
    <property type="entry name" value="Lipoprotein localisation LolA/LolB/LppX"/>
    <property type="match status" value="1"/>
</dbReference>
<dbReference type="HAMAP" id="MF_00233">
    <property type="entry name" value="LolB"/>
    <property type="match status" value="1"/>
</dbReference>
<dbReference type="InterPro" id="IPR029046">
    <property type="entry name" value="LolA/LolB/LppX"/>
</dbReference>
<dbReference type="InterPro" id="IPR004565">
    <property type="entry name" value="OM_lipoprot_LolB"/>
</dbReference>
<dbReference type="NCBIfam" id="TIGR00548">
    <property type="entry name" value="lolB"/>
    <property type="match status" value="1"/>
</dbReference>
<dbReference type="Pfam" id="PF03550">
    <property type="entry name" value="LolB"/>
    <property type="match status" value="1"/>
</dbReference>
<dbReference type="SUPFAM" id="SSF89392">
    <property type="entry name" value="Prokaryotic lipoproteins and lipoprotein localization factors"/>
    <property type="match status" value="1"/>
</dbReference>
<dbReference type="PROSITE" id="PS51257">
    <property type="entry name" value="PROKAR_LIPOPROTEIN"/>
    <property type="match status" value="1"/>
</dbReference>
<organism>
    <name type="scientific">Salmonella paratyphi A (strain AKU_12601)</name>
    <dbReference type="NCBI Taxonomy" id="554290"/>
    <lineage>
        <taxon>Bacteria</taxon>
        <taxon>Pseudomonadati</taxon>
        <taxon>Pseudomonadota</taxon>
        <taxon>Gammaproteobacteria</taxon>
        <taxon>Enterobacterales</taxon>
        <taxon>Enterobacteriaceae</taxon>
        <taxon>Salmonella</taxon>
    </lineage>
</organism>
<proteinExistence type="inferred from homology"/>
<comment type="function">
    <text evidence="1">Plays a critical role in the incorporation of lipoproteins in the outer membrane after they are released by the LolA protein.</text>
</comment>
<comment type="subunit">
    <text evidence="1">Monomer.</text>
</comment>
<comment type="subcellular location">
    <subcellularLocation>
        <location evidence="1">Cell outer membrane</location>
        <topology evidence="1">Lipid-anchor</topology>
    </subcellularLocation>
</comment>
<comment type="similarity">
    <text evidence="1">Belongs to the LolB family.</text>
</comment>
<reference key="1">
    <citation type="journal article" date="2009" name="BMC Genomics">
        <title>Pseudogene accumulation in the evolutionary histories of Salmonella enterica serovars Paratyphi A and Typhi.</title>
        <authorList>
            <person name="Holt K.E."/>
            <person name="Thomson N.R."/>
            <person name="Wain J."/>
            <person name="Langridge G.C."/>
            <person name="Hasan R."/>
            <person name="Bhutta Z.A."/>
            <person name="Quail M.A."/>
            <person name="Norbertczak H."/>
            <person name="Walker D."/>
            <person name="Simmonds M."/>
            <person name="White B."/>
            <person name="Bason N."/>
            <person name="Mungall K."/>
            <person name="Dougan G."/>
            <person name="Parkhill J."/>
        </authorList>
    </citation>
    <scope>NUCLEOTIDE SEQUENCE [LARGE SCALE GENOMIC DNA]</scope>
    <source>
        <strain>AKU_12601</strain>
    </source>
</reference>
<protein>
    <recommendedName>
        <fullName evidence="1">Outer-membrane lipoprotein LolB</fullName>
    </recommendedName>
</protein>
<name>LOLB_SALPK</name>
<sequence length="207" mass="23686">MTLPDFRLIRLLPLASLVLTACTLPGHKGPGKSPDSPQWRQHQQEVRHLNQYQTRGAFAYISDDQKVYARFFWQQTGQDRYRLLLTNPLGSTELELNAQPGNVQLVDNKGQRYTADDAEEMIGKLTGMPIPLNSLRQWILGLPGDATDYKLDDQYRLSEVNYRQDGKNWKVVYGGYDSKTQPAMPANMELSDGSQRIKLKMDNWIVK</sequence>
<keyword id="KW-0998">Cell outer membrane</keyword>
<keyword id="KW-0143">Chaperone</keyword>
<keyword id="KW-0449">Lipoprotein</keyword>
<keyword id="KW-0472">Membrane</keyword>
<keyword id="KW-0564">Palmitate</keyword>
<keyword id="KW-0653">Protein transport</keyword>
<keyword id="KW-0732">Signal</keyword>
<keyword id="KW-0813">Transport</keyword>
<accession>B5BI73</accession>
<evidence type="ECO:0000255" key="1">
    <source>
        <dbReference type="HAMAP-Rule" id="MF_00233"/>
    </source>
</evidence>